<reference key="1">
    <citation type="journal article" date="2006" name="Proc. Natl. Acad. Sci. U.S.A.">
        <title>Multireplicon genome architecture of Lactobacillus salivarius.</title>
        <authorList>
            <person name="Claesson M.J."/>
            <person name="Li Y."/>
            <person name="Leahy S."/>
            <person name="Canchaya C."/>
            <person name="van Pijkeren J.P."/>
            <person name="Cerdeno-Tarraga A.M."/>
            <person name="Parkhill J."/>
            <person name="Flynn S."/>
            <person name="O'Sullivan G.C."/>
            <person name="Collins J.K."/>
            <person name="Higgins D."/>
            <person name="Shanahan F."/>
            <person name="Fitzgerald G.F."/>
            <person name="van Sinderen D."/>
            <person name="O'Toole P.W."/>
        </authorList>
    </citation>
    <scope>NUCLEOTIDE SEQUENCE [LARGE SCALE GENOMIC DNA]</scope>
    <source>
        <strain>UCC118</strain>
    </source>
</reference>
<proteinExistence type="inferred from homology"/>
<gene>
    <name evidence="1" type="primary">rplC</name>
    <name type="ordered locus">LSL_1435</name>
</gene>
<comment type="function">
    <text evidence="1">One of the primary rRNA binding proteins, it binds directly near the 3'-end of the 23S rRNA, where it nucleates assembly of the 50S subunit.</text>
</comment>
<comment type="subunit">
    <text evidence="1">Part of the 50S ribosomal subunit. Forms a cluster with proteins L14 and L19.</text>
</comment>
<comment type="similarity">
    <text evidence="1">Belongs to the universal ribosomal protein uL3 family.</text>
</comment>
<dbReference type="EMBL" id="CP000233">
    <property type="protein sequence ID" value="ABE00239.1"/>
    <property type="molecule type" value="Genomic_DNA"/>
</dbReference>
<dbReference type="RefSeq" id="WP_003701302.1">
    <property type="nucleotide sequence ID" value="NC_007929.1"/>
</dbReference>
<dbReference type="RefSeq" id="YP_536322.1">
    <property type="nucleotide sequence ID" value="NC_007929.1"/>
</dbReference>
<dbReference type="SMR" id="Q1WS90"/>
<dbReference type="STRING" id="362948.LSL_1435"/>
<dbReference type="GeneID" id="89466170"/>
<dbReference type="KEGG" id="lsl:LSL_1435"/>
<dbReference type="PATRIC" id="fig|362948.14.peg.1518"/>
<dbReference type="HOGENOM" id="CLU_044142_4_1_9"/>
<dbReference type="OrthoDB" id="9806135at2"/>
<dbReference type="Proteomes" id="UP000006559">
    <property type="component" value="Chromosome"/>
</dbReference>
<dbReference type="GO" id="GO:0022625">
    <property type="term" value="C:cytosolic large ribosomal subunit"/>
    <property type="evidence" value="ECO:0007669"/>
    <property type="project" value="TreeGrafter"/>
</dbReference>
<dbReference type="GO" id="GO:0019843">
    <property type="term" value="F:rRNA binding"/>
    <property type="evidence" value="ECO:0007669"/>
    <property type="project" value="UniProtKB-UniRule"/>
</dbReference>
<dbReference type="GO" id="GO:0003735">
    <property type="term" value="F:structural constituent of ribosome"/>
    <property type="evidence" value="ECO:0007669"/>
    <property type="project" value="InterPro"/>
</dbReference>
<dbReference type="GO" id="GO:0006412">
    <property type="term" value="P:translation"/>
    <property type="evidence" value="ECO:0007669"/>
    <property type="project" value="UniProtKB-UniRule"/>
</dbReference>
<dbReference type="FunFam" id="2.40.30.10:FF:000004">
    <property type="entry name" value="50S ribosomal protein L3"/>
    <property type="match status" value="1"/>
</dbReference>
<dbReference type="FunFam" id="3.30.160.810:FF:000002">
    <property type="entry name" value="50S ribosomal protein L3"/>
    <property type="match status" value="1"/>
</dbReference>
<dbReference type="Gene3D" id="3.30.160.810">
    <property type="match status" value="1"/>
</dbReference>
<dbReference type="Gene3D" id="2.40.30.10">
    <property type="entry name" value="Translation factors"/>
    <property type="match status" value="1"/>
</dbReference>
<dbReference type="HAMAP" id="MF_01325_B">
    <property type="entry name" value="Ribosomal_uL3_B"/>
    <property type="match status" value="1"/>
</dbReference>
<dbReference type="InterPro" id="IPR000597">
    <property type="entry name" value="Ribosomal_uL3"/>
</dbReference>
<dbReference type="InterPro" id="IPR019927">
    <property type="entry name" value="Ribosomal_uL3_bac/org-type"/>
</dbReference>
<dbReference type="InterPro" id="IPR019926">
    <property type="entry name" value="Ribosomal_uL3_CS"/>
</dbReference>
<dbReference type="InterPro" id="IPR009000">
    <property type="entry name" value="Transl_B-barrel_sf"/>
</dbReference>
<dbReference type="NCBIfam" id="TIGR03625">
    <property type="entry name" value="L3_bact"/>
    <property type="match status" value="1"/>
</dbReference>
<dbReference type="PANTHER" id="PTHR11229">
    <property type="entry name" value="50S RIBOSOMAL PROTEIN L3"/>
    <property type="match status" value="1"/>
</dbReference>
<dbReference type="PANTHER" id="PTHR11229:SF16">
    <property type="entry name" value="LARGE RIBOSOMAL SUBUNIT PROTEIN UL3C"/>
    <property type="match status" value="1"/>
</dbReference>
<dbReference type="Pfam" id="PF00297">
    <property type="entry name" value="Ribosomal_L3"/>
    <property type="match status" value="1"/>
</dbReference>
<dbReference type="SUPFAM" id="SSF50447">
    <property type="entry name" value="Translation proteins"/>
    <property type="match status" value="1"/>
</dbReference>
<dbReference type="PROSITE" id="PS00474">
    <property type="entry name" value="RIBOSOMAL_L3"/>
    <property type="match status" value="1"/>
</dbReference>
<sequence length="207" mass="22465">MTTKGILGKKVGMTQVFTENGELVPVTVVKVDSNVVLQVKTMENDGYEAIQLGFDDLREVLTNKPAKGHAAKANTTPKRFVREIRDVELGEYKVGDEVKADIFEAGDFVDVTGTSKGHGFQGSIKRNGQHRGPMAHGSRYHRRPGSMGVIINRVMKGKLLPGRMGGNRVTIQNLEIVKADTENGVLLIKGNVPGANKSLVTIKSTVK</sequence>
<protein>
    <recommendedName>
        <fullName evidence="1">Large ribosomal subunit protein uL3</fullName>
    </recommendedName>
    <alternativeName>
        <fullName evidence="3">50S ribosomal protein L3</fullName>
    </alternativeName>
</protein>
<organism>
    <name type="scientific">Ligilactobacillus salivarius (strain UCC118)</name>
    <name type="common">Lactobacillus salivarius</name>
    <dbReference type="NCBI Taxonomy" id="362948"/>
    <lineage>
        <taxon>Bacteria</taxon>
        <taxon>Bacillati</taxon>
        <taxon>Bacillota</taxon>
        <taxon>Bacilli</taxon>
        <taxon>Lactobacillales</taxon>
        <taxon>Lactobacillaceae</taxon>
        <taxon>Ligilactobacillus</taxon>
    </lineage>
</organism>
<keyword id="KW-1185">Reference proteome</keyword>
<keyword id="KW-0687">Ribonucleoprotein</keyword>
<keyword id="KW-0689">Ribosomal protein</keyword>
<keyword id="KW-0694">RNA-binding</keyword>
<keyword id="KW-0699">rRNA-binding</keyword>
<name>RL3_LIGS1</name>
<accession>Q1WS90</accession>
<evidence type="ECO:0000255" key="1">
    <source>
        <dbReference type="HAMAP-Rule" id="MF_01325"/>
    </source>
</evidence>
<evidence type="ECO:0000256" key="2">
    <source>
        <dbReference type="SAM" id="MobiDB-lite"/>
    </source>
</evidence>
<evidence type="ECO:0000305" key="3"/>
<feature type="chain" id="PRO_1000052068" description="Large ribosomal subunit protein uL3">
    <location>
        <begin position="1"/>
        <end position="207"/>
    </location>
</feature>
<feature type="region of interest" description="Disordered" evidence="2">
    <location>
        <begin position="119"/>
        <end position="143"/>
    </location>
</feature>